<organism>
    <name type="scientific">Serratia proteamaculans (strain 568)</name>
    <dbReference type="NCBI Taxonomy" id="399741"/>
    <lineage>
        <taxon>Bacteria</taxon>
        <taxon>Pseudomonadati</taxon>
        <taxon>Pseudomonadota</taxon>
        <taxon>Gammaproteobacteria</taxon>
        <taxon>Enterobacterales</taxon>
        <taxon>Yersiniaceae</taxon>
        <taxon>Serratia</taxon>
    </lineage>
</organism>
<proteinExistence type="inferred from homology"/>
<name>RL31B_SERP5</name>
<reference key="1">
    <citation type="submission" date="2007-09" db="EMBL/GenBank/DDBJ databases">
        <title>Complete sequence of chromosome of Serratia proteamaculans 568.</title>
        <authorList>
            <consortium name="US DOE Joint Genome Institute"/>
            <person name="Copeland A."/>
            <person name="Lucas S."/>
            <person name="Lapidus A."/>
            <person name="Barry K."/>
            <person name="Glavina del Rio T."/>
            <person name="Dalin E."/>
            <person name="Tice H."/>
            <person name="Pitluck S."/>
            <person name="Chain P."/>
            <person name="Malfatti S."/>
            <person name="Shin M."/>
            <person name="Vergez L."/>
            <person name="Schmutz J."/>
            <person name="Larimer F."/>
            <person name="Land M."/>
            <person name="Hauser L."/>
            <person name="Kyrpides N."/>
            <person name="Kim E."/>
            <person name="Taghavi S."/>
            <person name="Newman L."/>
            <person name="Vangronsveld J."/>
            <person name="van der Lelie D."/>
            <person name="Richardson P."/>
        </authorList>
    </citation>
    <scope>NUCLEOTIDE SEQUENCE [LARGE SCALE GENOMIC DNA]</scope>
    <source>
        <strain>568</strain>
    </source>
</reference>
<protein>
    <recommendedName>
        <fullName evidence="1">Large ribosomal subunit protein bL31B</fullName>
    </recommendedName>
    <alternativeName>
        <fullName evidence="2">50S ribosomal protein L31 type B</fullName>
    </alternativeName>
</protein>
<gene>
    <name evidence="1" type="primary">rpmE2</name>
    <name type="ordered locus">Spro_1125</name>
</gene>
<keyword id="KW-0687">Ribonucleoprotein</keyword>
<keyword id="KW-0689">Ribosomal protein</keyword>
<sequence>MKAGIHPNYRTVVFHDLSADTYFKVGSTINTDRTIELEGESWPYVTLDVSSASHPYYTGKQKEFSKEGSTARFQQRFGRFFTGNK</sequence>
<feature type="chain" id="PRO_1000060500" description="Large ribosomal subunit protein bL31B">
    <location>
        <begin position="1"/>
        <end position="85"/>
    </location>
</feature>
<dbReference type="EMBL" id="CP000826">
    <property type="protein sequence ID" value="ABV40229.1"/>
    <property type="molecule type" value="Genomic_DNA"/>
</dbReference>
<dbReference type="SMR" id="A8GAT9"/>
<dbReference type="STRING" id="399741.Spro_1125"/>
<dbReference type="KEGG" id="spe:Spro_1125"/>
<dbReference type="eggNOG" id="COG0254">
    <property type="taxonomic scope" value="Bacteria"/>
</dbReference>
<dbReference type="HOGENOM" id="CLU_114306_2_1_6"/>
<dbReference type="OrthoDB" id="9803251at2"/>
<dbReference type="GO" id="GO:1990904">
    <property type="term" value="C:ribonucleoprotein complex"/>
    <property type="evidence" value="ECO:0007669"/>
    <property type="project" value="UniProtKB-KW"/>
</dbReference>
<dbReference type="GO" id="GO:0005840">
    <property type="term" value="C:ribosome"/>
    <property type="evidence" value="ECO:0007669"/>
    <property type="project" value="UniProtKB-KW"/>
</dbReference>
<dbReference type="GO" id="GO:0003735">
    <property type="term" value="F:structural constituent of ribosome"/>
    <property type="evidence" value="ECO:0007669"/>
    <property type="project" value="InterPro"/>
</dbReference>
<dbReference type="GO" id="GO:0006412">
    <property type="term" value="P:translation"/>
    <property type="evidence" value="ECO:0007669"/>
    <property type="project" value="UniProtKB-UniRule"/>
</dbReference>
<dbReference type="Gene3D" id="4.10.830.30">
    <property type="entry name" value="Ribosomal protein L31"/>
    <property type="match status" value="1"/>
</dbReference>
<dbReference type="HAMAP" id="MF_00502">
    <property type="entry name" value="Ribosomal_bL31_2"/>
    <property type="match status" value="1"/>
</dbReference>
<dbReference type="InterPro" id="IPR034704">
    <property type="entry name" value="Ribosomal_bL28/bL31-like_sf"/>
</dbReference>
<dbReference type="InterPro" id="IPR002150">
    <property type="entry name" value="Ribosomal_bL31"/>
</dbReference>
<dbReference type="InterPro" id="IPR027493">
    <property type="entry name" value="Ribosomal_bL31_B"/>
</dbReference>
<dbReference type="InterPro" id="IPR042105">
    <property type="entry name" value="Ribosomal_bL31_sf"/>
</dbReference>
<dbReference type="NCBIfam" id="TIGR00105">
    <property type="entry name" value="L31"/>
    <property type="match status" value="1"/>
</dbReference>
<dbReference type="NCBIfam" id="NF002462">
    <property type="entry name" value="PRK01678.1"/>
    <property type="match status" value="1"/>
</dbReference>
<dbReference type="PANTHER" id="PTHR33280">
    <property type="entry name" value="50S RIBOSOMAL PROTEIN L31, CHLOROPLASTIC"/>
    <property type="match status" value="1"/>
</dbReference>
<dbReference type="PANTHER" id="PTHR33280:SF1">
    <property type="entry name" value="LARGE RIBOSOMAL SUBUNIT PROTEIN BL31C"/>
    <property type="match status" value="1"/>
</dbReference>
<dbReference type="Pfam" id="PF01197">
    <property type="entry name" value="Ribosomal_L31"/>
    <property type="match status" value="1"/>
</dbReference>
<dbReference type="PRINTS" id="PR01249">
    <property type="entry name" value="RIBOSOMALL31"/>
</dbReference>
<dbReference type="SUPFAM" id="SSF143800">
    <property type="entry name" value="L28p-like"/>
    <property type="match status" value="1"/>
</dbReference>
<evidence type="ECO:0000255" key="1">
    <source>
        <dbReference type="HAMAP-Rule" id="MF_00502"/>
    </source>
</evidence>
<evidence type="ECO:0000305" key="2"/>
<comment type="subunit">
    <text evidence="1">Part of the 50S ribosomal subunit.</text>
</comment>
<comment type="similarity">
    <text evidence="1">Belongs to the bacterial ribosomal protein bL31 family. Type B subfamily.</text>
</comment>
<accession>A8GAT9</accession>